<keyword id="KW-1185">Reference proteome</keyword>
<protein>
    <recommendedName>
        <fullName evidence="3">F-box protein ETP1</fullName>
    </recommendedName>
    <alternativeName>
        <fullName evidence="3">EIN2 targeting protein 1</fullName>
    </alternativeName>
</protein>
<reference key="1">
    <citation type="journal article" date="2000" name="DNA Res.">
        <title>Structural analysis of Arabidopsis thaliana chromosome 3. II. Sequence features of the 4,251,695 bp regions covered by 90 P1, TAC and BAC clones.</title>
        <authorList>
            <person name="Kaneko T."/>
            <person name="Katoh T."/>
            <person name="Sato S."/>
            <person name="Nakamura Y."/>
            <person name="Asamizu E."/>
            <person name="Tabata S."/>
        </authorList>
    </citation>
    <scope>NUCLEOTIDE SEQUENCE [LARGE SCALE GENOMIC DNA]</scope>
    <source>
        <strain>cv. Columbia</strain>
    </source>
</reference>
<reference key="2">
    <citation type="journal article" date="2017" name="Plant J.">
        <title>Araport11: a complete reannotation of the Arabidopsis thaliana reference genome.</title>
        <authorList>
            <person name="Cheng C.Y."/>
            <person name="Krishnakumar V."/>
            <person name="Chan A.P."/>
            <person name="Thibaud-Nissen F."/>
            <person name="Schobel S."/>
            <person name="Town C.D."/>
        </authorList>
    </citation>
    <scope>GENOME REANNOTATION</scope>
    <source>
        <strain>cv. Columbia</strain>
    </source>
</reference>
<reference key="3">
    <citation type="journal article" date="2003" name="Science">
        <title>Empirical analysis of transcriptional activity in the Arabidopsis genome.</title>
        <authorList>
            <person name="Yamada K."/>
            <person name="Lim J."/>
            <person name="Dale J.M."/>
            <person name="Chen H."/>
            <person name="Shinn P."/>
            <person name="Palm C.J."/>
            <person name="Southwick A.M."/>
            <person name="Wu H.C."/>
            <person name="Kim C.J."/>
            <person name="Nguyen M."/>
            <person name="Pham P.K."/>
            <person name="Cheuk R.F."/>
            <person name="Karlin-Newmann G."/>
            <person name="Liu S.X."/>
            <person name="Lam B."/>
            <person name="Sakano H."/>
            <person name="Wu T."/>
            <person name="Yu G."/>
            <person name="Miranda M."/>
            <person name="Quach H.L."/>
            <person name="Tripp M."/>
            <person name="Chang C.H."/>
            <person name="Lee J.M."/>
            <person name="Toriumi M.J."/>
            <person name="Chan M.M."/>
            <person name="Tang C.C."/>
            <person name="Onodera C.S."/>
            <person name="Deng J.M."/>
            <person name="Akiyama K."/>
            <person name="Ansari Y."/>
            <person name="Arakawa T."/>
            <person name="Banh J."/>
            <person name="Banno F."/>
            <person name="Bowser L."/>
            <person name="Brooks S.Y."/>
            <person name="Carninci P."/>
            <person name="Chao Q."/>
            <person name="Choy N."/>
            <person name="Enju A."/>
            <person name="Goldsmith A.D."/>
            <person name="Gurjal M."/>
            <person name="Hansen N.F."/>
            <person name="Hayashizaki Y."/>
            <person name="Johnson-Hopson C."/>
            <person name="Hsuan V.W."/>
            <person name="Iida K."/>
            <person name="Karnes M."/>
            <person name="Khan S."/>
            <person name="Koesema E."/>
            <person name="Ishida J."/>
            <person name="Jiang P.X."/>
            <person name="Jones T."/>
            <person name="Kawai J."/>
            <person name="Kamiya A."/>
            <person name="Meyers C."/>
            <person name="Nakajima M."/>
            <person name="Narusaka M."/>
            <person name="Seki M."/>
            <person name="Sakurai T."/>
            <person name="Satou M."/>
            <person name="Tamse R."/>
            <person name="Vaysberg M."/>
            <person name="Wallender E.K."/>
            <person name="Wong C."/>
            <person name="Yamamura Y."/>
            <person name="Yuan S."/>
            <person name="Shinozaki K."/>
            <person name="Davis R.W."/>
            <person name="Theologis A."/>
            <person name="Ecker J.R."/>
        </authorList>
    </citation>
    <scope>NUCLEOTIDE SEQUENCE [LARGE SCALE MRNA]</scope>
    <source>
        <strain>cv. Columbia</strain>
    </source>
</reference>
<reference key="4">
    <citation type="submission" date="2002-03" db="EMBL/GenBank/DDBJ databases">
        <title>Full-length cDNA from Arabidopsis thaliana.</title>
        <authorList>
            <person name="Brover V.V."/>
            <person name="Troukhan M.E."/>
            <person name="Alexandrov N.A."/>
            <person name="Lu Y.-P."/>
            <person name="Flavell R.B."/>
            <person name="Feldmann K.A."/>
        </authorList>
    </citation>
    <scope>NUCLEOTIDE SEQUENCE [LARGE SCALE MRNA]</scope>
</reference>
<reference key="5">
    <citation type="journal article" date="2009" name="Genes Dev.">
        <title>Interplay between ethylene, ETP1/ETP2 F-box proteins, and degradation of EIN2 triggers ethylene responses in Arabidopsis.</title>
        <authorList>
            <person name="Qiao H."/>
            <person name="Chang K.N."/>
            <person name="Yazaki J."/>
            <person name="Ecker J.R."/>
        </authorList>
    </citation>
    <scope>FUNCTION</scope>
    <scope>INTERACTION WITH EIN2</scope>
    <scope>DISRUPTION PHENOTYPE</scope>
    <scope>INDUCTION BY ETHYLENE</scope>
</reference>
<sequence>MTIPDLCNDLVDEILCRVPARNLKRLRSTSKRWNRLFKDDRRFAREHMHKAPKEYLPLMLTSEYRICPVSINLQGDVPSVVLKRELSLPDPDYSHQFDIGRVFHCDGLLVCNHVGKNPRYGSKIVVWNPLTGQTRWIEAGYRWKEYEVRFVLGYCYQQDENNSCSKKIYKILCFYPNGQDTEIYELNYSDRWTRTIPDGDLTPGWTLIYSEQTVSMNGNLYLFASEKSKPHLGVSLLRFDFSTEKSSLCVTLPYQRPRYEILSISAVRGGENLSLLLQLDFESKTEIWVTNKIDDTTTKGAAVSWTKVLAFDLSPDLQLFSEEVNFLLDEDKKVAVCCERWLEPQEHHRYQCRREYKITDKIYILGEDNKVDEVGSGEGEATDSLEGISQVILNYAPSLVQIEQAGGGKTKRGDD</sequence>
<gene>
    <name evidence="3" type="primary">ETP1</name>
    <name evidence="5" type="ordered locus">At3g18980</name>
    <name evidence="6" type="ORF">K13E13.9</name>
</gene>
<feature type="chain" id="PRO_0000283432" description="F-box protein ETP1">
    <location>
        <begin position="1"/>
        <end position="415"/>
    </location>
</feature>
<feature type="domain" description="F-box" evidence="1">
    <location>
        <begin position="1"/>
        <end position="46"/>
    </location>
</feature>
<feature type="sequence conflict" description="In Ref. 4; AAM64887." evidence="4" ref="4">
    <original>E</original>
    <variation>D</variation>
    <location>
        <position position="85"/>
    </location>
</feature>
<feature type="sequence conflict" description="In Ref. 4; AAM64887." evidence="4" ref="4">
    <original>S</original>
    <variation>N</variation>
    <location>
        <position position="165"/>
    </location>
</feature>
<feature type="sequence conflict" description="In Ref. 4; AAM64887." evidence="4" ref="4">
    <original>A</original>
    <variation>T</variation>
    <location>
        <position position="335"/>
    </location>
</feature>
<dbReference type="EMBL" id="AP000735">
    <property type="protein sequence ID" value="BAB01694.1"/>
    <property type="molecule type" value="Genomic_DNA"/>
</dbReference>
<dbReference type="EMBL" id="CP002686">
    <property type="protein sequence ID" value="AEE76176.1"/>
    <property type="molecule type" value="Genomic_DNA"/>
</dbReference>
<dbReference type="EMBL" id="CP002686">
    <property type="protein sequence ID" value="AEE76177.1"/>
    <property type="molecule type" value="Genomic_DNA"/>
</dbReference>
<dbReference type="EMBL" id="AY045839">
    <property type="protein sequence ID" value="AAK76513.1"/>
    <property type="molecule type" value="mRNA"/>
</dbReference>
<dbReference type="EMBL" id="AY091375">
    <property type="protein sequence ID" value="AAM14314.1"/>
    <property type="molecule type" value="mRNA"/>
</dbReference>
<dbReference type="EMBL" id="AY087337">
    <property type="protein sequence ID" value="AAM64887.1"/>
    <property type="molecule type" value="mRNA"/>
</dbReference>
<dbReference type="RefSeq" id="NP_001078185.1">
    <property type="nucleotide sequence ID" value="NM_001084716.2"/>
</dbReference>
<dbReference type="RefSeq" id="NP_566622.1">
    <property type="nucleotide sequence ID" value="NM_112784.3"/>
</dbReference>
<dbReference type="BioGRID" id="6764">
    <property type="interactions" value="1"/>
</dbReference>
<dbReference type="FunCoup" id="Q9LJ68">
    <property type="interactions" value="6"/>
</dbReference>
<dbReference type="IntAct" id="Q9LJ68">
    <property type="interactions" value="2"/>
</dbReference>
<dbReference type="STRING" id="3702.Q9LJ68"/>
<dbReference type="iPTMnet" id="Q9LJ68"/>
<dbReference type="PaxDb" id="3702-AT3G18980.1"/>
<dbReference type="ProteomicsDB" id="230880"/>
<dbReference type="EnsemblPlants" id="AT3G18980.1">
    <property type="protein sequence ID" value="AT3G18980.1"/>
    <property type="gene ID" value="AT3G18980"/>
</dbReference>
<dbReference type="EnsemblPlants" id="AT3G18980.2">
    <property type="protein sequence ID" value="AT3G18980.2"/>
    <property type="gene ID" value="AT3G18980"/>
</dbReference>
<dbReference type="GeneID" id="821431"/>
<dbReference type="Gramene" id="AT3G18980.1">
    <property type="protein sequence ID" value="AT3G18980.1"/>
    <property type="gene ID" value="AT3G18980"/>
</dbReference>
<dbReference type="Gramene" id="AT3G18980.2">
    <property type="protein sequence ID" value="AT3G18980.2"/>
    <property type="gene ID" value="AT3G18980"/>
</dbReference>
<dbReference type="KEGG" id="ath:AT3G18980"/>
<dbReference type="Araport" id="AT3G18980"/>
<dbReference type="TAIR" id="AT3G18980">
    <property type="gene designation" value="ETP1"/>
</dbReference>
<dbReference type="HOGENOM" id="CLU_034692_0_0_1"/>
<dbReference type="InParanoid" id="Q9LJ68"/>
<dbReference type="OMA" id="TSEYRIC"/>
<dbReference type="PhylomeDB" id="Q9LJ68"/>
<dbReference type="PRO" id="PR:Q9LJ68"/>
<dbReference type="Proteomes" id="UP000006548">
    <property type="component" value="Chromosome 3"/>
</dbReference>
<dbReference type="ExpressionAtlas" id="Q9LJ68">
    <property type="expression patterns" value="baseline and differential"/>
</dbReference>
<dbReference type="CDD" id="cd22157">
    <property type="entry name" value="F-box_AtFBW1-like"/>
    <property type="match status" value="1"/>
</dbReference>
<dbReference type="InterPro" id="IPR006527">
    <property type="entry name" value="F-box-assoc_dom_typ1"/>
</dbReference>
<dbReference type="InterPro" id="IPR017451">
    <property type="entry name" value="F-box-assoc_interact_dom"/>
</dbReference>
<dbReference type="InterPro" id="IPR036047">
    <property type="entry name" value="F-box-like_dom_sf"/>
</dbReference>
<dbReference type="InterPro" id="IPR001810">
    <property type="entry name" value="F-box_dom"/>
</dbReference>
<dbReference type="InterPro" id="IPR011043">
    <property type="entry name" value="Gal_Oxase/kelch_b-propeller"/>
</dbReference>
<dbReference type="InterPro" id="IPR050796">
    <property type="entry name" value="SCF_F-box_component"/>
</dbReference>
<dbReference type="NCBIfam" id="TIGR01640">
    <property type="entry name" value="F_box_assoc_1"/>
    <property type="match status" value="1"/>
</dbReference>
<dbReference type="PANTHER" id="PTHR31672">
    <property type="entry name" value="BNACNNG10540D PROTEIN"/>
    <property type="match status" value="1"/>
</dbReference>
<dbReference type="PANTHER" id="PTHR31672:SF13">
    <property type="entry name" value="F-BOX PROTEIN CPR30-LIKE"/>
    <property type="match status" value="1"/>
</dbReference>
<dbReference type="Pfam" id="PF00646">
    <property type="entry name" value="F-box"/>
    <property type="match status" value="1"/>
</dbReference>
<dbReference type="Pfam" id="PF07734">
    <property type="entry name" value="FBA_1"/>
    <property type="match status" value="1"/>
</dbReference>
<dbReference type="SMART" id="SM00256">
    <property type="entry name" value="FBOX"/>
    <property type="match status" value="1"/>
</dbReference>
<dbReference type="SUPFAM" id="SSF81383">
    <property type="entry name" value="F-box domain"/>
    <property type="match status" value="1"/>
</dbReference>
<dbReference type="SUPFAM" id="SSF50965">
    <property type="entry name" value="Galactose oxidase, central domain"/>
    <property type="match status" value="1"/>
</dbReference>
<dbReference type="PROSITE" id="PS50181">
    <property type="entry name" value="FBOX"/>
    <property type="match status" value="1"/>
</dbReference>
<name>FB162_ARATH</name>
<proteinExistence type="evidence at protein level"/>
<comment type="function">
    <text evidence="2">Negative regulator of EIN2 protein stability.</text>
</comment>
<comment type="subunit">
    <text evidence="2">Interacts with EIN2 (via C-terminus).</text>
</comment>
<comment type="interaction">
    <interactant intactId="EBI-1238820">
        <id>Q9LJ68</id>
    </interactant>
    <interactant intactId="EBI-2437287">
        <id>Q9S814</id>
        <label>EIN2</label>
    </interactant>
    <organismsDiffer>false</organismsDiffer>
    <experiments>4</experiments>
</comment>
<comment type="induction">
    <text evidence="2">Ethylene treatment has no effect on RNA, but down-regulates the protein levels.</text>
</comment>
<comment type="disruption phenotype">
    <text evidence="2">Slight ethylene hypersensitivity.</text>
</comment>
<comment type="miscellaneous">
    <text evidence="2">Double knock-down mutants of ETP1 and ETP2 show an accumulation of EIN2 protein and a constitutive ethylene response.</text>
</comment>
<organism>
    <name type="scientific">Arabidopsis thaliana</name>
    <name type="common">Mouse-ear cress</name>
    <dbReference type="NCBI Taxonomy" id="3702"/>
    <lineage>
        <taxon>Eukaryota</taxon>
        <taxon>Viridiplantae</taxon>
        <taxon>Streptophyta</taxon>
        <taxon>Embryophyta</taxon>
        <taxon>Tracheophyta</taxon>
        <taxon>Spermatophyta</taxon>
        <taxon>Magnoliopsida</taxon>
        <taxon>eudicotyledons</taxon>
        <taxon>Gunneridae</taxon>
        <taxon>Pentapetalae</taxon>
        <taxon>rosids</taxon>
        <taxon>malvids</taxon>
        <taxon>Brassicales</taxon>
        <taxon>Brassicaceae</taxon>
        <taxon>Camelineae</taxon>
        <taxon>Arabidopsis</taxon>
    </lineage>
</organism>
<accession>Q9LJ68</accession>
<accession>Q8LB99</accession>
<evidence type="ECO:0000255" key="1">
    <source>
        <dbReference type="PROSITE-ProRule" id="PRU00080"/>
    </source>
</evidence>
<evidence type="ECO:0000269" key="2">
    <source>
    </source>
</evidence>
<evidence type="ECO:0000303" key="3">
    <source>
    </source>
</evidence>
<evidence type="ECO:0000305" key="4"/>
<evidence type="ECO:0000312" key="5">
    <source>
        <dbReference type="Araport" id="AT3G18980"/>
    </source>
</evidence>
<evidence type="ECO:0000312" key="6">
    <source>
        <dbReference type="EMBL" id="BAB01694.1"/>
    </source>
</evidence>